<evidence type="ECO:0000255" key="1">
    <source>
        <dbReference type="HAMAP-Rule" id="MF_01390"/>
    </source>
</evidence>
<name>MATK_PINBN</name>
<dbReference type="EMBL" id="AF143427">
    <property type="protein sequence ID" value="AAF69182.1"/>
    <property type="molecule type" value="Genomic_DNA"/>
</dbReference>
<dbReference type="GO" id="GO:0009507">
    <property type="term" value="C:chloroplast"/>
    <property type="evidence" value="ECO:0007669"/>
    <property type="project" value="UniProtKB-SubCell"/>
</dbReference>
<dbReference type="GO" id="GO:0003723">
    <property type="term" value="F:RNA binding"/>
    <property type="evidence" value="ECO:0007669"/>
    <property type="project" value="UniProtKB-KW"/>
</dbReference>
<dbReference type="GO" id="GO:0006397">
    <property type="term" value="P:mRNA processing"/>
    <property type="evidence" value="ECO:0007669"/>
    <property type="project" value="UniProtKB-KW"/>
</dbReference>
<dbReference type="GO" id="GO:0008380">
    <property type="term" value="P:RNA splicing"/>
    <property type="evidence" value="ECO:0007669"/>
    <property type="project" value="UniProtKB-UniRule"/>
</dbReference>
<dbReference type="GO" id="GO:0008033">
    <property type="term" value="P:tRNA processing"/>
    <property type="evidence" value="ECO:0007669"/>
    <property type="project" value="UniProtKB-KW"/>
</dbReference>
<dbReference type="HAMAP" id="MF_01390">
    <property type="entry name" value="MatK"/>
    <property type="match status" value="1"/>
</dbReference>
<dbReference type="InterPro" id="IPR024937">
    <property type="entry name" value="Domain_X"/>
</dbReference>
<dbReference type="InterPro" id="IPR002866">
    <property type="entry name" value="Maturase_MatK"/>
</dbReference>
<dbReference type="InterPro" id="IPR024942">
    <property type="entry name" value="Maturase_MatK_N"/>
</dbReference>
<dbReference type="PANTHER" id="PTHR34811">
    <property type="entry name" value="MATURASE K"/>
    <property type="match status" value="1"/>
</dbReference>
<dbReference type="PANTHER" id="PTHR34811:SF1">
    <property type="entry name" value="MATURASE K"/>
    <property type="match status" value="1"/>
</dbReference>
<dbReference type="Pfam" id="PF01348">
    <property type="entry name" value="Intron_maturas2"/>
    <property type="match status" value="1"/>
</dbReference>
<dbReference type="Pfam" id="PF01824">
    <property type="entry name" value="MatK_N"/>
    <property type="match status" value="1"/>
</dbReference>
<gene>
    <name evidence="1" type="primary">matK</name>
</gene>
<accession>Q9MV60</accession>
<feature type="chain" id="PRO_0000143605" description="Maturase K">
    <location>
        <begin position="1"/>
        <end position="515"/>
    </location>
</feature>
<reference key="1">
    <citation type="journal article" date="2000" name="Mol. Biol. Evol.">
        <title>Phylogeny and divergence times in Pinaceae: evidence from three genomes.</title>
        <authorList>
            <person name="Wang X.Q."/>
            <person name="Tank D.C."/>
            <person name="Sang T."/>
        </authorList>
    </citation>
    <scope>NUCLEOTIDE SEQUENCE [GENOMIC DNA]</scope>
</reference>
<geneLocation type="chloroplast"/>
<organism>
    <name type="scientific">Pinus banksiana</name>
    <name type="common">Jack pine</name>
    <name type="synonym">Pinus divaricata</name>
    <dbReference type="NCBI Taxonomy" id="3353"/>
    <lineage>
        <taxon>Eukaryota</taxon>
        <taxon>Viridiplantae</taxon>
        <taxon>Streptophyta</taxon>
        <taxon>Embryophyta</taxon>
        <taxon>Tracheophyta</taxon>
        <taxon>Spermatophyta</taxon>
        <taxon>Pinopsida</taxon>
        <taxon>Pinidae</taxon>
        <taxon>Conifers I</taxon>
        <taxon>Pinales</taxon>
        <taxon>Pinaceae</taxon>
        <taxon>Pinus</taxon>
        <taxon>Pinus subgen. Pinus</taxon>
    </lineage>
</organism>
<proteinExistence type="inferred from homology"/>
<sequence length="515" mass="60943">MDEFHRCGKEDSFWQQCFLYPLFFKEDLYAISHDHYLDVSSSSRPMEHLSSNDQLSFLTVKRLIGQIRKQNHSIVLFVNCDPNPLADRKKSSYSESVLEALTLVLEVPFSIWSKYSVEGMNESKSFRSIHSIFPFLEDKFPHSNSILDARIPYSIHPEILVRTFRRWIRDAPSLHPLRSVLYEYRNSTENLQRSIIVVPRVNTRFFLFLWNYYVCECESILFSRLKRSSHSRSLSHGSFPQRTHFHRKIKHIIIFSRRNSLKSIWSLKDPKIHYVRYGERPIIAIKGAHLLVKKCRYYLLIFRQFYFHLWSEPYRVCSHQLSKNCSSSPGYFLRVRMNPILVRTKMLDELFIADLITDEIDPIVPIVPIIGLLATEKFCDISGRPISKLSWTSLTDDDILDRFDQIWRNLFHYYSGSFDRDGLYRIKYILSLSCAKTLACKHKSTIRVVRKELGPELFKKSFSKEREFDSLRFSSKAAARSQRERIWHSDIPQINPLANSWQKIQDLKIENLFDQ</sequence>
<comment type="function">
    <text evidence="1">Usually encoded in the trnK tRNA gene intron. Probably assists in splicing its own and other chloroplast group II introns.</text>
</comment>
<comment type="subcellular location">
    <subcellularLocation>
        <location>Plastid</location>
        <location>Chloroplast</location>
    </subcellularLocation>
</comment>
<comment type="similarity">
    <text evidence="1">Belongs to the intron maturase 2 family. MatK subfamily.</text>
</comment>
<keyword id="KW-0150">Chloroplast</keyword>
<keyword id="KW-0507">mRNA processing</keyword>
<keyword id="KW-0934">Plastid</keyword>
<keyword id="KW-0694">RNA-binding</keyword>
<keyword id="KW-0819">tRNA processing</keyword>
<protein>
    <recommendedName>
        <fullName evidence="1">Maturase K</fullName>
    </recommendedName>
    <alternativeName>
        <fullName evidence="1">Intron maturase</fullName>
    </alternativeName>
</protein>